<protein>
    <recommendedName>
        <fullName evidence="1">Protein RecA</fullName>
    </recommendedName>
    <alternativeName>
        <fullName evidence="1">Recombinase A</fullName>
    </alternativeName>
</protein>
<gene>
    <name evidence="1" type="primary">recA</name>
</gene>
<sequence length="274" mass="29601">SIMKMDGSQQEENLDVISTGSLGVDLALGVGGLPRGRVVEIFGPESSGKTTLCLEAIAQCQKTGGICAFIDAEHAFDPVYARKLGVKVEELYLSQPDTGEQALEICDTLVRSGGVDMVVVDSVAALVPKAEIEGEMGDSHVGLQARLMSQALRKLTGHIKRTNTLVVFINQIRMKIGVMFGSPETTTGGNALKFYASVRLDIRRTGQIKKGDDVIGNETKVKVIKNKVAPPFRQAEFDILYGEGVSWEGELIDLGVKYDIVEKSGAWYSYNGSK</sequence>
<dbReference type="EMBL" id="U57909">
    <property type="protein sequence ID" value="AAB49199.1"/>
    <property type="molecule type" value="Genomic_DNA"/>
</dbReference>
<dbReference type="SMR" id="Q59629"/>
<dbReference type="GO" id="GO:0005829">
    <property type="term" value="C:cytosol"/>
    <property type="evidence" value="ECO:0007669"/>
    <property type="project" value="TreeGrafter"/>
</dbReference>
<dbReference type="GO" id="GO:0005524">
    <property type="term" value="F:ATP binding"/>
    <property type="evidence" value="ECO:0007669"/>
    <property type="project" value="UniProtKB-KW"/>
</dbReference>
<dbReference type="GO" id="GO:0016887">
    <property type="term" value="F:ATP hydrolysis activity"/>
    <property type="evidence" value="ECO:0007669"/>
    <property type="project" value="InterPro"/>
</dbReference>
<dbReference type="GO" id="GO:0140664">
    <property type="term" value="F:ATP-dependent DNA damage sensor activity"/>
    <property type="evidence" value="ECO:0007669"/>
    <property type="project" value="InterPro"/>
</dbReference>
<dbReference type="GO" id="GO:0003697">
    <property type="term" value="F:single-stranded DNA binding"/>
    <property type="evidence" value="ECO:0007669"/>
    <property type="project" value="InterPro"/>
</dbReference>
<dbReference type="GO" id="GO:0006310">
    <property type="term" value="P:DNA recombination"/>
    <property type="evidence" value="ECO:0007669"/>
    <property type="project" value="UniProtKB-KW"/>
</dbReference>
<dbReference type="GO" id="GO:0006281">
    <property type="term" value="P:DNA repair"/>
    <property type="evidence" value="ECO:0007669"/>
    <property type="project" value="UniProtKB-KW"/>
</dbReference>
<dbReference type="GO" id="GO:0009432">
    <property type="term" value="P:SOS response"/>
    <property type="evidence" value="ECO:0007669"/>
    <property type="project" value="UniProtKB-KW"/>
</dbReference>
<dbReference type="CDD" id="cd00983">
    <property type="entry name" value="RecA"/>
    <property type="match status" value="1"/>
</dbReference>
<dbReference type="FunFam" id="3.40.50.300:FF:000087">
    <property type="entry name" value="Recombinase RecA"/>
    <property type="match status" value="1"/>
</dbReference>
<dbReference type="Gene3D" id="3.40.50.300">
    <property type="entry name" value="P-loop containing nucleotide triphosphate hydrolases"/>
    <property type="match status" value="1"/>
</dbReference>
<dbReference type="HAMAP" id="MF_00268">
    <property type="entry name" value="RecA"/>
    <property type="match status" value="1"/>
</dbReference>
<dbReference type="InterPro" id="IPR003593">
    <property type="entry name" value="AAA+_ATPase"/>
</dbReference>
<dbReference type="InterPro" id="IPR013765">
    <property type="entry name" value="DNA_recomb/repair_RecA"/>
</dbReference>
<dbReference type="InterPro" id="IPR020584">
    <property type="entry name" value="DNA_recomb/repair_RecA_CS"/>
</dbReference>
<dbReference type="InterPro" id="IPR027417">
    <property type="entry name" value="P-loop_NTPase"/>
</dbReference>
<dbReference type="InterPro" id="IPR049261">
    <property type="entry name" value="RecA-like_C"/>
</dbReference>
<dbReference type="InterPro" id="IPR049428">
    <property type="entry name" value="RecA-like_N"/>
</dbReference>
<dbReference type="InterPro" id="IPR020588">
    <property type="entry name" value="RecA_ATP-bd"/>
</dbReference>
<dbReference type="InterPro" id="IPR023400">
    <property type="entry name" value="RecA_C_sf"/>
</dbReference>
<dbReference type="InterPro" id="IPR020587">
    <property type="entry name" value="RecA_monomer-monomer_interface"/>
</dbReference>
<dbReference type="NCBIfam" id="TIGR02012">
    <property type="entry name" value="tigrfam_recA"/>
    <property type="match status" value="1"/>
</dbReference>
<dbReference type="PANTHER" id="PTHR45900:SF1">
    <property type="entry name" value="MITOCHONDRIAL DNA REPAIR PROTEIN RECA HOMOLOG-RELATED"/>
    <property type="match status" value="1"/>
</dbReference>
<dbReference type="PANTHER" id="PTHR45900">
    <property type="entry name" value="RECA"/>
    <property type="match status" value="1"/>
</dbReference>
<dbReference type="Pfam" id="PF00154">
    <property type="entry name" value="RecA"/>
    <property type="match status" value="1"/>
</dbReference>
<dbReference type="Pfam" id="PF21096">
    <property type="entry name" value="RecA_C"/>
    <property type="match status" value="1"/>
</dbReference>
<dbReference type="PRINTS" id="PR00142">
    <property type="entry name" value="RECA"/>
</dbReference>
<dbReference type="SMART" id="SM00382">
    <property type="entry name" value="AAA"/>
    <property type="match status" value="1"/>
</dbReference>
<dbReference type="SUPFAM" id="SSF52540">
    <property type="entry name" value="P-loop containing nucleoside triphosphate hydrolases"/>
    <property type="match status" value="1"/>
</dbReference>
<dbReference type="SUPFAM" id="SSF54752">
    <property type="entry name" value="RecA protein, C-terminal domain"/>
    <property type="match status" value="1"/>
</dbReference>
<dbReference type="PROSITE" id="PS00321">
    <property type="entry name" value="RECA_1"/>
    <property type="match status" value="1"/>
</dbReference>
<dbReference type="PROSITE" id="PS50162">
    <property type="entry name" value="RECA_2"/>
    <property type="match status" value="1"/>
</dbReference>
<dbReference type="PROSITE" id="PS50163">
    <property type="entry name" value="RECA_3"/>
    <property type="match status" value="1"/>
</dbReference>
<proteinExistence type="inferred from homology"/>
<keyword id="KW-0067">ATP-binding</keyword>
<keyword id="KW-0963">Cytoplasm</keyword>
<keyword id="KW-0227">DNA damage</keyword>
<keyword id="KW-0233">DNA recombination</keyword>
<keyword id="KW-0234">DNA repair</keyword>
<keyword id="KW-0238">DNA-binding</keyword>
<keyword id="KW-0547">Nucleotide-binding</keyword>
<keyword id="KW-0742">SOS response</keyword>
<name>RECA_NEIPH</name>
<evidence type="ECO:0000255" key="1">
    <source>
        <dbReference type="HAMAP-Rule" id="MF_00268"/>
    </source>
</evidence>
<organism>
    <name type="scientific">Neisseria pharyngis</name>
    <dbReference type="NCBI Taxonomy" id="29434"/>
    <lineage>
        <taxon>Bacteria</taxon>
        <taxon>Pseudomonadati</taxon>
        <taxon>Pseudomonadota</taxon>
        <taxon>Betaproteobacteria</taxon>
        <taxon>Neisseriales</taxon>
        <taxon>Neisseriaceae</taxon>
        <taxon>Neisseria</taxon>
    </lineage>
</organism>
<comment type="function">
    <text evidence="1">Can catalyze the hydrolysis of ATP in the presence of single-stranded DNA, the ATP-dependent uptake of single-stranded DNA by duplex DNA, and the ATP-dependent hybridization of homologous single-stranded DNAs. It interacts with LexA causing its activation and leading to its autocatalytic cleavage.</text>
</comment>
<comment type="subcellular location">
    <subcellularLocation>
        <location evidence="1">Cytoplasm</location>
    </subcellularLocation>
</comment>
<comment type="similarity">
    <text evidence="1">Belongs to the RecA family.</text>
</comment>
<feature type="chain" id="PRO_0000122781" description="Protein RecA">
    <location>
        <begin position="1" status="less than"/>
        <end position="274" status="greater than"/>
    </location>
</feature>
<feature type="binding site" evidence="1">
    <location>
        <begin position="43"/>
        <end position="50"/>
    </location>
    <ligand>
        <name>ATP</name>
        <dbReference type="ChEBI" id="CHEBI:30616"/>
    </ligand>
</feature>
<feature type="non-terminal residue">
    <location>
        <position position="1"/>
    </location>
</feature>
<feature type="non-terminal residue">
    <location>
        <position position="274"/>
    </location>
</feature>
<accession>Q59629</accession>
<reference key="1">
    <citation type="journal article" date="1996" name="J. Mol. Evol.">
        <title>A comparison of the nucleotide sequences of the adk and recA genes of pathogenic and commensal Neisseria species: evidence for extensive interspecies recombination within adk.</title>
        <authorList>
            <person name="Feil E."/>
            <person name="Zhou J."/>
            <person name="Maynard Smith J."/>
            <person name="Spratt B.G."/>
        </authorList>
    </citation>
    <scope>NUCLEOTIDE SEQUENCE [GENOMIC DNA]</scope>
    <source>
        <strain>NCTC 4590 / Flava</strain>
    </source>
</reference>